<dbReference type="EMBL" id="AF440571">
    <property type="protein sequence ID" value="AAL27762.1"/>
    <property type="molecule type" value="Genomic_DNA"/>
</dbReference>
<dbReference type="RefSeq" id="NP_445716.1">
    <property type="nucleotide sequence ID" value="NC_003214.2"/>
</dbReference>
<dbReference type="GeneID" id="922309"/>
<dbReference type="KEGG" id="vg:922309"/>
<dbReference type="Proteomes" id="UP000007017">
    <property type="component" value="Segment"/>
</dbReference>
<dbReference type="GO" id="GO:0033644">
    <property type="term" value="C:host cell membrane"/>
    <property type="evidence" value="ECO:0007669"/>
    <property type="project" value="UniProtKB-SubCell"/>
</dbReference>
<dbReference type="GO" id="GO:0016020">
    <property type="term" value="C:membrane"/>
    <property type="evidence" value="ECO:0007669"/>
    <property type="project" value="UniProtKB-KW"/>
</dbReference>
<sequence length="332" mass="36360">MKLKLVEISSIIRGGANIYVNNKLVATTHNNVTPSFILSLIKSIIGVSAIYGGYFEMPSTATAKLFYKNTPVTSAVLSHTSFTEETISGYEHTRIIFTFSDASRTKYSFDSLQLWTASTHALLSHVSDIALTSPLKKNPQDVVQIDWWIEMESGQPFANILSYLQQQQATYCTSSCTIPSVVPNMVYGYSVFNAFFILLALPNVIQVARDIKTPLTNYLVEGLTLASQVKPQGITSVICYDVCNCQMTTNPQQGTVSEFIGDNYVYVAFNFNNPCPSSEYVVPISTLDLGNGYELQFAVAGVPSNGTGASALLIKIPYGKATLKNLFTHQGE</sequence>
<keyword id="KW-1043">Host membrane</keyword>
<keyword id="KW-0472">Membrane</keyword>
<keyword id="KW-1185">Reference proteome</keyword>
<keyword id="KW-0812">Transmembrane</keyword>
<keyword id="KW-1133">Transmembrane helix</keyword>
<protein>
    <recommendedName>
        <fullName>Uncharacterized protein 53</fullName>
    </recommendedName>
</protein>
<comment type="subcellular location">
    <subcellularLocation>
        <location evidence="2">Host membrane</location>
        <topology evidence="2">Single-pass membrane protein</topology>
    </subcellularLocation>
</comment>
<organism>
    <name type="scientific">Sulfolobus islandicus filamentous virus (isolate Iceland/Hveragerdi)</name>
    <name type="common">SIFV</name>
    <dbReference type="NCBI Taxonomy" id="654908"/>
    <lineage>
        <taxon>Viruses</taxon>
        <taxon>Adnaviria</taxon>
        <taxon>Zilligvirae</taxon>
        <taxon>Taleaviricota</taxon>
        <taxon>Tokiviricetes</taxon>
        <taxon>Ligamenvirales</taxon>
        <taxon>Lipothrixviridae</taxon>
        <taxon>Betalipothrixvirus</taxon>
        <taxon>Sulfolobus islandicus filamentous virus</taxon>
    </lineage>
</organism>
<organismHost>
    <name type="scientific">Saccharolobus islandicus</name>
    <name type="common">Sulfolobus islandicus</name>
    <dbReference type="NCBI Taxonomy" id="43080"/>
</organismHost>
<proteinExistence type="predicted"/>
<reference key="1">
    <citation type="journal article" date="2000" name="Virology">
        <title>A novel lipothrixvirus, SIFV, of the extremely thermophilic crenarchaeon Sulfolobus.</title>
        <authorList>
            <person name="Arnold H.P."/>
            <person name="Zillig W."/>
            <person name="Ziese U."/>
            <person name="Holz I."/>
            <person name="Crosby M."/>
            <person name="Utterback T."/>
            <person name="Weidmann J.F."/>
            <person name="Umayam L.A."/>
            <person name="Teffera K."/>
            <person name="Kristjanson J.K."/>
            <person name="Klenk H.P."/>
            <person name="Nelson K.E."/>
            <person name="Fraser C.M."/>
        </authorList>
    </citation>
    <scope>NUCLEOTIDE SEQUENCE [GENOMIC DNA]</scope>
</reference>
<name>Y053_SIFVH</name>
<gene>
    <name type="primary">SIFV0053</name>
</gene>
<evidence type="ECO:0000255" key="1"/>
<evidence type="ECO:0000305" key="2"/>
<feature type="chain" id="PRO_0000385444" description="Uncharacterized protein 53">
    <location>
        <begin position="1"/>
        <end position="332"/>
    </location>
</feature>
<feature type="transmembrane region" description="Helical" evidence="1">
    <location>
        <begin position="185"/>
        <end position="205"/>
    </location>
</feature>
<accession>Q914H9</accession>